<protein>
    <recommendedName>
        <fullName>Xaa-Arg dipeptidase</fullName>
        <ecNumber evidence="1">3.4.13.4</ecNumber>
    </recommendedName>
</protein>
<accession>A3KG59</accession>
<accession>Q3ULU7</accession>
<reference key="1">
    <citation type="journal article" date="2005" name="Science">
        <title>The transcriptional landscape of the mammalian genome.</title>
        <authorList>
            <person name="Carninci P."/>
            <person name="Kasukawa T."/>
            <person name="Katayama S."/>
            <person name="Gough J."/>
            <person name="Frith M.C."/>
            <person name="Maeda N."/>
            <person name="Oyama R."/>
            <person name="Ravasi T."/>
            <person name="Lenhard B."/>
            <person name="Wells C."/>
            <person name="Kodzius R."/>
            <person name="Shimokawa K."/>
            <person name="Bajic V.B."/>
            <person name="Brenner S.E."/>
            <person name="Batalov S."/>
            <person name="Forrest A.R."/>
            <person name="Zavolan M."/>
            <person name="Davis M.J."/>
            <person name="Wilming L.G."/>
            <person name="Aidinis V."/>
            <person name="Allen J.E."/>
            <person name="Ambesi-Impiombato A."/>
            <person name="Apweiler R."/>
            <person name="Aturaliya R.N."/>
            <person name="Bailey T.L."/>
            <person name="Bansal M."/>
            <person name="Baxter L."/>
            <person name="Beisel K.W."/>
            <person name="Bersano T."/>
            <person name="Bono H."/>
            <person name="Chalk A.M."/>
            <person name="Chiu K.P."/>
            <person name="Choudhary V."/>
            <person name="Christoffels A."/>
            <person name="Clutterbuck D.R."/>
            <person name="Crowe M.L."/>
            <person name="Dalla E."/>
            <person name="Dalrymple B.P."/>
            <person name="de Bono B."/>
            <person name="Della Gatta G."/>
            <person name="di Bernardo D."/>
            <person name="Down T."/>
            <person name="Engstrom P."/>
            <person name="Fagiolini M."/>
            <person name="Faulkner G."/>
            <person name="Fletcher C.F."/>
            <person name="Fukushima T."/>
            <person name="Furuno M."/>
            <person name="Futaki S."/>
            <person name="Gariboldi M."/>
            <person name="Georgii-Hemming P."/>
            <person name="Gingeras T.R."/>
            <person name="Gojobori T."/>
            <person name="Green R.E."/>
            <person name="Gustincich S."/>
            <person name="Harbers M."/>
            <person name="Hayashi Y."/>
            <person name="Hensch T.K."/>
            <person name="Hirokawa N."/>
            <person name="Hill D."/>
            <person name="Huminiecki L."/>
            <person name="Iacono M."/>
            <person name="Ikeo K."/>
            <person name="Iwama A."/>
            <person name="Ishikawa T."/>
            <person name="Jakt M."/>
            <person name="Kanapin A."/>
            <person name="Katoh M."/>
            <person name="Kawasawa Y."/>
            <person name="Kelso J."/>
            <person name="Kitamura H."/>
            <person name="Kitano H."/>
            <person name="Kollias G."/>
            <person name="Krishnan S.P."/>
            <person name="Kruger A."/>
            <person name="Kummerfeld S.K."/>
            <person name="Kurochkin I.V."/>
            <person name="Lareau L.F."/>
            <person name="Lazarevic D."/>
            <person name="Lipovich L."/>
            <person name="Liu J."/>
            <person name="Liuni S."/>
            <person name="McWilliam S."/>
            <person name="Madan Babu M."/>
            <person name="Madera M."/>
            <person name="Marchionni L."/>
            <person name="Matsuda H."/>
            <person name="Matsuzawa S."/>
            <person name="Miki H."/>
            <person name="Mignone F."/>
            <person name="Miyake S."/>
            <person name="Morris K."/>
            <person name="Mottagui-Tabar S."/>
            <person name="Mulder N."/>
            <person name="Nakano N."/>
            <person name="Nakauchi H."/>
            <person name="Ng P."/>
            <person name="Nilsson R."/>
            <person name="Nishiguchi S."/>
            <person name="Nishikawa S."/>
            <person name="Nori F."/>
            <person name="Ohara O."/>
            <person name="Okazaki Y."/>
            <person name="Orlando V."/>
            <person name="Pang K.C."/>
            <person name="Pavan W.J."/>
            <person name="Pavesi G."/>
            <person name="Pesole G."/>
            <person name="Petrovsky N."/>
            <person name="Piazza S."/>
            <person name="Reed J."/>
            <person name="Reid J.F."/>
            <person name="Ring B.Z."/>
            <person name="Ringwald M."/>
            <person name="Rost B."/>
            <person name="Ruan Y."/>
            <person name="Salzberg S.L."/>
            <person name="Sandelin A."/>
            <person name="Schneider C."/>
            <person name="Schoenbach C."/>
            <person name="Sekiguchi K."/>
            <person name="Semple C.A."/>
            <person name="Seno S."/>
            <person name="Sessa L."/>
            <person name="Sheng Y."/>
            <person name="Shibata Y."/>
            <person name="Shimada H."/>
            <person name="Shimada K."/>
            <person name="Silva D."/>
            <person name="Sinclair B."/>
            <person name="Sperling S."/>
            <person name="Stupka E."/>
            <person name="Sugiura K."/>
            <person name="Sultana R."/>
            <person name="Takenaka Y."/>
            <person name="Taki K."/>
            <person name="Tammoja K."/>
            <person name="Tan S.L."/>
            <person name="Tang S."/>
            <person name="Taylor M.S."/>
            <person name="Tegner J."/>
            <person name="Teichmann S.A."/>
            <person name="Ueda H.R."/>
            <person name="van Nimwegen E."/>
            <person name="Verardo R."/>
            <person name="Wei C.L."/>
            <person name="Yagi K."/>
            <person name="Yamanishi H."/>
            <person name="Zabarovsky E."/>
            <person name="Zhu S."/>
            <person name="Zimmer A."/>
            <person name="Hide W."/>
            <person name="Bult C."/>
            <person name="Grimmond S.M."/>
            <person name="Teasdale R.D."/>
            <person name="Liu E.T."/>
            <person name="Brusic V."/>
            <person name="Quackenbush J."/>
            <person name="Wahlestedt C."/>
            <person name="Mattick J.S."/>
            <person name="Hume D.A."/>
            <person name="Kai C."/>
            <person name="Sasaki D."/>
            <person name="Tomaru Y."/>
            <person name="Fukuda S."/>
            <person name="Kanamori-Katayama M."/>
            <person name="Suzuki M."/>
            <person name="Aoki J."/>
            <person name="Arakawa T."/>
            <person name="Iida J."/>
            <person name="Imamura K."/>
            <person name="Itoh M."/>
            <person name="Kato T."/>
            <person name="Kawaji H."/>
            <person name="Kawagashira N."/>
            <person name="Kawashima T."/>
            <person name="Kojima M."/>
            <person name="Kondo S."/>
            <person name="Konno H."/>
            <person name="Nakano K."/>
            <person name="Ninomiya N."/>
            <person name="Nishio T."/>
            <person name="Okada M."/>
            <person name="Plessy C."/>
            <person name="Shibata K."/>
            <person name="Shiraki T."/>
            <person name="Suzuki S."/>
            <person name="Tagami M."/>
            <person name="Waki K."/>
            <person name="Watahiki A."/>
            <person name="Okamura-Oho Y."/>
            <person name="Suzuki H."/>
            <person name="Kawai J."/>
            <person name="Hayashizaki Y."/>
        </authorList>
    </citation>
    <scope>NUCLEOTIDE SEQUENCE [LARGE SCALE MRNA] (ISOFORM 2)</scope>
    <source>
        <tissue>Mammary gland</tissue>
    </source>
</reference>
<reference key="2">
    <citation type="journal article" date="2009" name="PLoS Biol.">
        <title>Lineage-specific biology revealed by a finished genome assembly of the mouse.</title>
        <authorList>
            <person name="Church D.M."/>
            <person name="Goodstadt L."/>
            <person name="Hillier L.W."/>
            <person name="Zody M.C."/>
            <person name="Goldstein S."/>
            <person name="She X."/>
            <person name="Bult C.J."/>
            <person name="Agarwala R."/>
            <person name="Cherry J.L."/>
            <person name="DiCuccio M."/>
            <person name="Hlavina W."/>
            <person name="Kapustin Y."/>
            <person name="Meric P."/>
            <person name="Maglott D."/>
            <person name="Birtle Z."/>
            <person name="Marques A.C."/>
            <person name="Graves T."/>
            <person name="Zhou S."/>
            <person name="Teague B."/>
            <person name="Potamousis K."/>
            <person name="Churas C."/>
            <person name="Place M."/>
            <person name="Herschleb J."/>
            <person name="Runnheim R."/>
            <person name="Forrest D."/>
            <person name="Amos-Landgraf J."/>
            <person name="Schwartz D.C."/>
            <person name="Cheng Z."/>
            <person name="Lindblad-Toh K."/>
            <person name="Eichler E.E."/>
            <person name="Ponting C.P."/>
        </authorList>
    </citation>
    <scope>NUCLEOTIDE SEQUENCE [LARGE SCALE GENOMIC DNA]</scope>
    <source>
        <strain>C57BL/6J</strain>
    </source>
</reference>
<reference key="3">
    <citation type="journal article" date="2010" name="Cell">
        <title>A tissue-specific atlas of mouse protein phosphorylation and expression.</title>
        <authorList>
            <person name="Huttlin E.L."/>
            <person name="Jedrychowski M.P."/>
            <person name="Elias J.E."/>
            <person name="Goswami T."/>
            <person name="Rad R."/>
            <person name="Beausoleil S.A."/>
            <person name="Villen J."/>
            <person name="Haas W."/>
            <person name="Sowa M.E."/>
            <person name="Gygi S.P."/>
        </authorList>
    </citation>
    <scope>IDENTIFICATION BY MASS SPECTROMETRY [LARGE SCALE ANALYSIS]</scope>
    <source>
        <tissue>Brown adipose tissue</tissue>
        <tissue>Heart</tissue>
        <tissue>Pancreas</tissue>
    </source>
</reference>
<reference key="4">
    <citation type="journal article" date="2014" name="J. Biol. Chem.">
        <title>Metabolite proofreading in carnosine and homocarnosine synthesis: molecular identification of PM20D2 as beta-alanyl-lysine dipeptidase.</title>
        <authorList>
            <person name="Veiga-da-Cunha M."/>
            <person name="Chevalier N."/>
            <person name="Stroobant V."/>
            <person name="Vertommen D."/>
            <person name="Van Schaftingen E."/>
        </authorList>
    </citation>
    <scope>FUNCTION</scope>
    <scope>CATALYTIC ACTIVITY</scope>
    <scope>BIOPHYSICOCHEMICAL PROPERTIES</scope>
</reference>
<feature type="chain" id="PRO_0000286341" description="Xaa-Arg dipeptidase">
    <location>
        <begin position="1"/>
        <end position="431"/>
    </location>
</feature>
<feature type="splice variant" id="VSP_025030" description="In isoform 2." evidence="2">
    <original>DIESE</original>
    <variation>RAFQN</variation>
    <location>
        <begin position="301"/>
        <end position="305"/>
    </location>
</feature>
<feature type="splice variant" id="VSP_025031" description="In isoform 2." evidence="2">
    <location>
        <begin position="306"/>
        <end position="431"/>
    </location>
</feature>
<feature type="sequence conflict" description="In Ref. 1; BAE26351." evidence="4" ref="1">
    <original>E</original>
    <variation>K</variation>
    <location>
        <position position="175"/>
    </location>
</feature>
<organism>
    <name type="scientific">Mus musculus</name>
    <name type="common">Mouse</name>
    <dbReference type="NCBI Taxonomy" id="10090"/>
    <lineage>
        <taxon>Eukaryota</taxon>
        <taxon>Metazoa</taxon>
        <taxon>Chordata</taxon>
        <taxon>Craniata</taxon>
        <taxon>Vertebrata</taxon>
        <taxon>Euteleostomi</taxon>
        <taxon>Mammalia</taxon>
        <taxon>Eutheria</taxon>
        <taxon>Euarchontoglires</taxon>
        <taxon>Glires</taxon>
        <taxon>Rodentia</taxon>
        <taxon>Myomorpha</taxon>
        <taxon>Muroidea</taxon>
        <taxon>Muridae</taxon>
        <taxon>Murinae</taxon>
        <taxon>Mus</taxon>
        <taxon>Mus</taxon>
    </lineage>
</organism>
<sequence>MGPVVERPAEPGTSSAAELELLKRRAAERIDEAAERLGALSRAIWSAPELAYEEHRAHGELTRFFECEPPAASWAVQPHFGLPTAFRAEWAPPESAAGPRALQVAFLCEYDALPALGHACGHNLIAEVGVAAALGLRAALESIAAPPPVKVIVLGTPAEEDGGGKIDLIEAGAFENLDVVFMAHPSQENAAYLPDVAEHDVTVKYYGKASHAAAYPWEGVNALDAAVLAYTNLSVLRQQMKPTWRVHGIIKNGGVKPNIIPSYSELVYYFRAPSMKELQVLTKKAEDCFRAAALATGCTVDIESEAHDYYNVIPNKTLCSAYTENGKKLGMEFISEDAVLNGPSGSTDFGNVSFVVPGIHPYFYIGTDALNHTEQYTEAAGSQAAQLYTLRTAKALAMTALDVIFKPALLEGVRKEFKCKLQEEQLLNTAA</sequence>
<name>P20D2_MOUSE</name>
<gene>
    <name evidence="3 6" type="primary">Pm20d2</name>
    <name type="synonym">Acy1l2</name>
    <name type="synonym">Gm424</name>
</gene>
<dbReference type="EC" id="3.4.13.4" evidence="1"/>
<dbReference type="EMBL" id="AK145296">
    <property type="protein sequence ID" value="BAE26351.1"/>
    <property type="molecule type" value="mRNA"/>
</dbReference>
<dbReference type="EMBL" id="AL670464">
    <property type="status" value="NOT_ANNOTATED_CDS"/>
    <property type="molecule type" value="Genomic_DNA"/>
</dbReference>
<dbReference type="CCDS" id="CCDS51136.1">
    <molecule id="A3KG59-1"/>
</dbReference>
<dbReference type="RefSeq" id="NP_001030039.2">
    <molecule id="A3KG59-1"/>
    <property type="nucleotide sequence ID" value="NM_001034867.3"/>
</dbReference>
<dbReference type="RefSeq" id="NP_001406370.1">
    <molecule id="A3KG59-2"/>
    <property type="nucleotide sequence ID" value="NM_001419441.1"/>
</dbReference>
<dbReference type="SMR" id="A3KG59"/>
<dbReference type="FunCoup" id="A3KG59">
    <property type="interactions" value="359"/>
</dbReference>
<dbReference type="STRING" id="10090.ENSMUSP00000095783"/>
<dbReference type="iPTMnet" id="A3KG59"/>
<dbReference type="PhosphoSitePlus" id="A3KG59"/>
<dbReference type="jPOST" id="A3KG59"/>
<dbReference type="PaxDb" id="10090-ENSMUSP00000095783"/>
<dbReference type="PeptideAtlas" id="A3KG59"/>
<dbReference type="ProteomicsDB" id="294278">
    <molecule id="A3KG59-1"/>
</dbReference>
<dbReference type="ProteomicsDB" id="294279">
    <molecule id="A3KG59-2"/>
</dbReference>
<dbReference type="Antibodypedia" id="31855">
    <property type="antibodies" value="102 antibodies from 21 providers"/>
</dbReference>
<dbReference type="Ensembl" id="ENSMUST00000098181.9">
    <molecule id="A3KG59-1"/>
    <property type="protein sequence ID" value="ENSMUSP00000095783.3"/>
    <property type="gene ID" value="ENSMUSG00000054659.14"/>
</dbReference>
<dbReference type="Ensembl" id="ENSMUST00000119167.2">
    <molecule id="A3KG59-2"/>
    <property type="protein sequence ID" value="ENSMUSP00000113669.2"/>
    <property type="gene ID" value="ENSMUSG00000054659.14"/>
</dbReference>
<dbReference type="GeneID" id="242377"/>
<dbReference type="KEGG" id="mmu:242377"/>
<dbReference type="UCSC" id="uc008sfs.1">
    <molecule id="A3KG59-2"/>
    <property type="organism name" value="mouse"/>
</dbReference>
<dbReference type="UCSC" id="uc012dbj.2">
    <molecule id="A3KG59-1"/>
    <property type="organism name" value="mouse"/>
</dbReference>
<dbReference type="AGR" id="MGI:2685270"/>
<dbReference type="CTD" id="135293"/>
<dbReference type="MGI" id="MGI:2685270">
    <property type="gene designation" value="Pm20d2"/>
</dbReference>
<dbReference type="VEuPathDB" id="HostDB:ENSMUSG00000054659"/>
<dbReference type="eggNOG" id="ENOG502QQPD">
    <property type="taxonomic scope" value="Eukaryota"/>
</dbReference>
<dbReference type="GeneTree" id="ENSGT00390000003365"/>
<dbReference type="HOGENOM" id="CLU_031812_1_1_1"/>
<dbReference type="InParanoid" id="A3KG59"/>
<dbReference type="OMA" id="HRSCAKT"/>
<dbReference type="OrthoDB" id="6119954at2759"/>
<dbReference type="PhylomeDB" id="A3KG59"/>
<dbReference type="TreeFam" id="TF332656"/>
<dbReference type="BioGRID-ORCS" id="242377">
    <property type="hits" value="2 hits in 77 CRISPR screens"/>
</dbReference>
<dbReference type="PRO" id="PR:A3KG59"/>
<dbReference type="Proteomes" id="UP000000589">
    <property type="component" value="Chromosome 4"/>
</dbReference>
<dbReference type="RNAct" id="A3KG59">
    <property type="molecule type" value="protein"/>
</dbReference>
<dbReference type="Bgee" id="ENSMUSG00000054659">
    <property type="expression patterns" value="Expressed in hindlimb stylopod muscle and 51 other cell types or tissues"/>
</dbReference>
<dbReference type="GO" id="GO:0005654">
    <property type="term" value="C:nucleoplasm"/>
    <property type="evidence" value="ECO:0007669"/>
    <property type="project" value="Ensembl"/>
</dbReference>
<dbReference type="GO" id="GO:0004180">
    <property type="term" value="F:carboxypeptidase activity"/>
    <property type="evidence" value="ECO:0007669"/>
    <property type="project" value="UniProtKB-KW"/>
</dbReference>
<dbReference type="GO" id="GO:0016805">
    <property type="term" value="F:dipeptidase activity"/>
    <property type="evidence" value="ECO:0000314"/>
    <property type="project" value="MGI"/>
</dbReference>
<dbReference type="GO" id="GO:0042802">
    <property type="term" value="F:identical protein binding"/>
    <property type="evidence" value="ECO:0007669"/>
    <property type="project" value="Ensembl"/>
</dbReference>
<dbReference type="GO" id="GO:0006508">
    <property type="term" value="P:proteolysis"/>
    <property type="evidence" value="ECO:0000314"/>
    <property type="project" value="MGI"/>
</dbReference>
<dbReference type="GO" id="GO:0051246">
    <property type="term" value="P:regulation of protein metabolic process"/>
    <property type="evidence" value="ECO:0000314"/>
    <property type="project" value="MGI"/>
</dbReference>
<dbReference type="CDD" id="cd05672">
    <property type="entry name" value="M20_ACY1L2-like"/>
    <property type="match status" value="1"/>
</dbReference>
<dbReference type="FunFam" id="3.30.70.360:FF:000004">
    <property type="entry name" value="Peptidase M20 domain-containing protein 2"/>
    <property type="match status" value="1"/>
</dbReference>
<dbReference type="FunFam" id="3.40.630.10:FF:000039">
    <property type="entry name" value="Peptidase M20 domain-containing protein 2"/>
    <property type="match status" value="1"/>
</dbReference>
<dbReference type="Gene3D" id="3.30.70.360">
    <property type="match status" value="1"/>
</dbReference>
<dbReference type="Gene3D" id="3.40.630.10">
    <property type="entry name" value="Zn peptidases"/>
    <property type="match status" value="1"/>
</dbReference>
<dbReference type="InterPro" id="IPR017439">
    <property type="entry name" value="Amidohydrolase"/>
</dbReference>
<dbReference type="InterPro" id="IPR036264">
    <property type="entry name" value="Bact_exopeptidase_dim_dom"/>
</dbReference>
<dbReference type="InterPro" id="IPR002933">
    <property type="entry name" value="Peptidase_M20"/>
</dbReference>
<dbReference type="InterPro" id="IPR052030">
    <property type="entry name" value="Peptidase_M20/M20A_hydrolases"/>
</dbReference>
<dbReference type="InterPro" id="IPR011650">
    <property type="entry name" value="Peptidase_M20_dimer"/>
</dbReference>
<dbReference type="InterPro" id="IPR017144">
    <property type="entry name" value="Xaa-Arg_dipeptidase"/>
</dbReference>
<dbReference type="NCBIfam" id="TIGR01891">
    <property type="entry name" value="amidohydrolases"/>
    <property type="match status" value="1"/>
</dbReference>
<dbReference type="PANTHER" id="PTHR30575">
    <property type="entry name" value="PEPTIDASE M20"/>
    <property type="match status" value="1"/>
</dbReference>
<dbReference type="PANTHER" id="PTHR30575:SF0">
    <property type="entry name" value="XAA-ARG DIPEPTIDASE"/>
    <property type="match status" value="1"/>
</dbReference>
<dbReference type="Pfam" id="PF07687">
    <property type="entry name" value="M20_dimer"/>
    <property type="match status" value="1"/>
</dbReference>
<dbReference type="Pfam" id="PF01546">
    <property type="entry name" value="Peptidase_M20"/>
    <property type="match status" value="1"/>
</dbReference>
<dbReference type="PIRSF" id="PIRSF037226">
    <property type="entry name" value="Amidohydrolase_ACY1L2_prd"/>
    <property type="match status" value="1"/>
</dbReference>
<dbReference type="SUPFAM" id="SSF55031">
    <property type="entry name" value="Bacterial exopeptidase dimerisation domain"/>
    <property type="match status" value="1"/>
</dbReference>
<dbReference type="SUPFAM" id="SSF53187">
    <property type="entry name" value="Zn-dependent exopeptidases"/>
    <property type="match status" value="1"/>
</dbReference>
<evidence type="ECO:0000269" key="1">
    <source>
    </source>
</evidence>
<evidence type="ECO:0000303" key="2">
    <source>
    </source>
</evidence>
<evidence type="ECO:0000303" key="3">
    <source>
    </source>
</evidence>
<evidence type="ECO:0000305" key="4"/>
<evidence type="ECO:0000305" key="5">
    <source>
    </source>
</evidence>
<evidence type="ECO:0000312" key="6">
    <source>
        <dbReference type="MGI" id="MGI:2685270"/>
    </source>
</evidence>
<keyword id="KW-0025">Alternative splicing</keyword>
<keyword id="KW-0121">Carboxypeptidase</keyword>
<keyword id="KW-0378">Hydrolase</keyword>
<keyword id="KW-0645">Protease</keyword>
<keyword id="KW-1185">Reference proteome</keyword>
<proteinExistence type="evidence at protein level"/>
<comment type="function">
    <text evidence="1">Catalyzes the peptide bond hydrolysis in dipeptides having basic amino acids lysine, ornithine or arginine at C-terminus. Postulated to function in a metabolite repair mechanism by eliminating alternate dipeptide by-products formed during carnosine synthesis.</text>
</comment>
<comment type="catalytic activity">
    <reaction evidence="1">
        <text>beta-alanyl-L-lysine + H2O = beta-alanine + L-lysine</text>
        <dbReference type="Rhea" id="RHEA:59608"/>
        <dbReference type="ChEBI" id="CHEBI:15377"/>
        <dbReference type="ChEBI" id="CHEBI:32551"/>
        <dbReference type="ChEBI" id="CHEBI:57966"/>
        <dbReference type="ChEBI" id="CHEBI:143161"/>
        <dbReference type="EC" id="3.4.13.4"/>
    </reaction>
    <physiologicalReaction direction="left-to-right" evidence="5">
        <dbReference type="Rhea" id="RHEA:59609"/>
    </physiologicalReaction>
</comment>
<comment type="catalytic activity">
    <reaction evidence="1">
        <text>beta-alanyl-L-arginine + H2O = beta-alanine + L-arginine</text>
        <dbReference type="Rhea" id="RHEA:59616"/>
        <dbReference type="ChEBI" id="CHEBI:15377"/>
        <dbReference type="ChEBI" id="CHEBI:32682"/>
        <dbReference type="ChEBI" id="CHEBI:57966"/>
        <dbReference type="ChEBI" id="CHEBI:143157"/>
        <dbReference type="EC" id="3.4.13.4"/>
    </reaction>
    <physiologicalReaction direction="left-to-right" evidence="5">
        <dbReference type="Rhea" id="RHEA:59617"/>
    </physiologicalReaction>
</comment>
<comment type="catalytic activity">
    <reaction evidence="1">
        <text>beta-alanyl-L-ornithine + H2O = beta-alanine + L-ornithine</text>
        <dbReference type="Rhea" id="RHEA:59612"/>
        <dbReference type="ChEBI" id="CHEBI:15377"/>
        <dbReference type="ChEBI" id="CHEBI:46911"/>
        <dbReference type="ChEBI" id="CHEBI:57966"/>
        <dbReference type="ChEBI" id="CHEBI:143162"/>
        <dbReference type="EC" id="3.4.13.4"/>
    </reaction>
    <physiologicalReaction direction="left-to-right" evidence="5">
        <dbReference type="Rhea" id="RHEA:59613"/>
    </physiologicalReaction>
</comment>
<comment type="catalytic activity">
    <reaction evidence="1">
        <text>N(2)-(4-aminobutanoyl)-L-lysine + H2O = 4-aminobutanoate + L-lysine</text>
        <dbReference type="Rhea" id="RHEA:59620"/>
        <dbReference type="ChEBI" id="CHEBI:15377"/>
        <dbReference type="ChEBI" id="CHEBI:32551"/>
        <dbReference type="ChEBI" id="CHEBI:59888"/>
        <dbReference type="ChEBI" id="CHEBI:143159"/>
        <dbReference type="EC" id="3.4.13.4"/>
    </reaction>
    <physiologicalReaction direction="left-to-right" evidence="5">
        <dbReference type="Rhea" id="RHEA:59621"/>
    </physiologicalReaction>
</comment>
<comment type="catalytic activity">
    <reaction evidence="1">
        <text>N(2)-(4-aminobutanoyl)-L-arginine + H2O = 4-aminobutanoate + L-arginine</text>
        <dbReference type="Rhea" id="RHEA:59628"/>
        <dbReference type="ChEBI" id="CHEBI:15377"/>
        <dbReference type="ChEBI" id="CHEBI:32682"/>
        <dbReference type="ChEBI" id="CHEBI:59888"/>
        <dbReference type="ChEBI" id="CHEBI:143158"/>
        <dbReference type="EC" id="3.4.13.4"/>
    </reaction>
    <physiologicalReaction direction="left-to-right" evidence="5">
        <dbReference type="Rhea" id="RHEA:59629"/>
    </physiologicalReaction>
</comment>
<comment type="catalytic activity">
    <reaction evidence="1">
        <text>N(2)-(4-aminobutanoyl)-L-ornithine + H2O = 4-aminobutanoate + L-ornithine</text>
        <dbReference type="Rhea" id="RHEA:59624"/>
        <dbReference type="ChEBI" id="CHEBI:15377"/>
        <dbReference type="ChEBI" id="CHEBI:46911"/>
        <dbReference type="ChEBI" id="CHEBI:59888"/>
        <dbReference type="ChEBI" id="CHEBI:143160"/>
        <dbReference type="EC" id="3.4.13.4"/>
    </reaction>
    <physiologicalReaction direction="left-to-right" evidence="5">
        <dbReference type="Rhea" id="RHEA:59625"/>
    </physiologicalReaction>
</comment>
<comment type="biophysicochemical properties">
    <kinetics>
        <KM evidence="1">1.9 mM for beta-alanyl-L-lysine</KM>
        <KM evidence="1">1.9 mM for beta-alanyl-L-ornithine</KM>
        <KM evidence="1">6.8 mM for beta-alanyl-L-arginine</KM>
        <KM evidence="1">2.6 mM for N(2)-(4-aminobutanoyl)-L-lysine</KM>
        <KM evidence="1">1.35 mM for N(2)-(4-aminobutanoyl)-L-ornithine</KM>
        <Vmax evidence="1">17.4 umol/min/mg enzyme toward beta-alanyl-L-lysine</Vmax>
        <Vmax evidence="1">30.7 umol/min/mg enzyme toward beta-alanyl-L-ornithine</Vmax>
        <Vmax evidence="1">27.0 umol/min/mg enzyme toward N(2)-(4-aminobutanoyl)-L-lysine</Vmax>
        <Vmax evidence="1">12.5 umol/min/mg enzyme toward N(2)-(4-aminobutanoyl)-L-ornithine</Vmax>
    </kinetics>
</comment>
<comment type="alternative products">
    <event type="alternative splicing"/>
    <isoform>
        <id>A3KG59-1</id>
        <name>1</name>
        <sequence type="displayed"/>
    </isoform>
    <isoform>
        <id>A3KG59-2</id>
        <name>2</name>
        <sequence type="described" ref="VSP_025030 VSP_025031"/>
    </isoform>
</comment>
<comment type="similarity">
    <text evidence="4">Belongs to the peptidase M20A family.</text>
</comment>